<accession>Q3K5W6</accession>
<sequence length="116" mass="12506">MSVESFTPTALQFTQGAAHKVKSLVDEEGNDRLKLRVFVTGGGCSGFQYGFTFDEDVAEDDTIVEREGVSLVVDPMSFQYLAGAEVDYQEGLEGSRFVIKNPNATTTCGCGSSFSI</sequence>
<reference key="1">
    <citation type="journal article" date="2009" name="Genome Biol.">
        <title>Genomic and genetic analyses of diversity and plant interactions of Pseudomonas fluorescens.</title>
        <authorList>
            <person name="Silby M.W."/>
            <person name="Cerdeno-Tarraga A.M."/>
            <person name="Vernikos G.S."/>
            <person name="Giddens S.R."/>
            <person name="Jackson R.W."/>
            <person name="Preston G.M."/>
            <person name="Zhang X.-X."/>
            <person name="Moon C.D."/>
            <person name="Gehrig S.M."/>
            <person name="Godfrey S.A.C."/>
            <person name="Knight C.G."/>
            <person name="Malone J.G."/>
            <person name="Robinson Z."/>
            <person name="Spiers A.J."/>
            <person name="Harris S."/>
            <person name="Challis G.L."/>
            <person name="Yaxley A.M."/>
            <person name="Harris D."/>
            <person name="Seeger K."/>
            <person name="Murphy L."/>
            <person name="Rutter S."/>
            <person name="Squares R."/>
            <person name="Quail M.A."/>
            <person name="Saunders E."/>
            <person name="Mavromatis K."/>
            <person name="Brettin T.S."/>
            <person name="Bentley S.D."/>
            <person name="Hothersall J."/>
            <person name="Stephens E."/>
            <person name="Thomas C.M."/>
            <person name="Parkhill J."/>
            <person name="Levy S.B."/>
            <person name="Rainey P.B."/>
            <person name="Thomson N.R."/>
        </authorList>
    </citation>
    <scope>NUCLEOTIDE SEQUENCE [LARGE SCALE GENOMIC DNA]</scope>
    <source>
        <strain>Pf0-1</strain>
    </source>
</reference>
<protein>
    <recommendedName>
        <fullName evidence="1">Iron-sulfur cluster insertion protein ErpA</fullName>
    </recommendedName>
</protein>
<gene>
    <name evidence="1" type="primary">erpA</name>
    <name type="ordered locus">Pfl01_5101</name>
</gene>
<dbReference type="EMBL" id="CP000094">
    <property type="protein sequence ID" value="ABA76838.1"/>
    <property type="molecule type" value="Genomic_DNA"/>
</dbReference>
<dbReference type="RefSeq" id="WP_003228776.1">
    <property type="nucleotide sequence ID" value="NC_007492.2"/>
</dbReference>
<dbReference type="SMR" id="Q3K5W6"/>
<dbReference type="GeneID" id="93491444"/>
<dbReference type="KEGG" id="pfo:Pfl01_5101"/>
<dbReference type="eggNOG" id="COG0316">
    <property type="taxonomic scope" value="Bacteria"/>
</dbReference>
<dbReference type="HOGENOM" id="CLU_069054_5_3_6"/>
<dbReference type="Proteomes" id="UP000002704">
    <property type="component" value="Chromosome"/>
</dbReference>
<dbReference type="GO" id="GO:0005829">
    <property type="term" value="C:cytosol"/>
    <property type="evidence" value="ECO:0007669"/>
    <property type="project" value="TreeGrafter"/>
</dbReference>
<dbReference type="GO" id="GO:0051537">
    <property type="term" value="F:2 iron, 2 sulfur cluster binding"/>
    <property type="evidence" value="ECO:0007669"/>
    <property type="project" value="TreeGrafter"/>
</dbReference>
<dbReference type="GO" id="GO:0051539">
    <property type="term" value="F:4 iron, 4 sulfur cluster binding"/>
    <property type="evidence" value="ECO:0007669"/>
    <property type="project" value="TreeGrafter"/>
</dbReference>
<dbReference type="GO" id="GO:0005506">
    <property type="term" value="F:iron ion binding"/>
    <property type="evidence" value="ECO:0007669"/>
    <property type="project" value="UniProtKB-UniRule"/>
</dbReference>
<dbReference type="GO" id="GO:0016226">
    <property type="term" value="P:iron-sulfur cluster assembly"/>
    <property type="evidence" value="ECO:0007669"/>
    <property type="project" value="UniProtKB-UniRule"/>
</dbReference>
<dbReference type="FunFam" id="2.60.300.12:FF:000002">
    <property type="entry name" value="Iron-sulfur cluster insertion protein ErpA"/>
    <property type="match status" value="1"/>
</dbReference>
<dbReference type="Gene3D" id="2.60.300.12">
    <property type="entry name" value="HesB-like domain"/>
    <property type="match status" value="1"/>
</dbReference>
<dbReference type="HAMAP" id="MF_01380">
    <property type="entry name" value="Fe_S_insert_ErpA"/>
    <property type="match status" value="1"/>
</dbReference>
<dbReference type="InterPro" id="IPR000361">
    <property type="entry name" value="FeS_biogenesis"/>
</dbReference>
<dbReference type="InterPro" id="IPR016092">
    <property type="entry name" value="FeS_cluster_insertion"/>
</dbReference>
<dbReference type="InterPro" id="IPR017870">
    <property type="entry name" value="FeS_cluster_insertion_CS"/>
</dbReference>
<dbReference type="InterPro" id="IPR023063">
    <property type="entry name" value="FeS_cluster_insertion_RrpA"/>
</dbReference>
<dbReference type="InterPro" id="IPR035903">
    <property type="entry name" value="HesB-like_dom_sf"/>
</dbReference>
<dbReference type="NCBIfam" id="TIGR00049">
    <property type="entry name" value="iron-sulfur cluster assembly accessory protein"/>
    <property type="match status" value="1"/>
</dbReference>
<dbReference type="NCBIfam" id="NF010147">
    <property type="entry name" value="PRK13623.1"/>
    <property type="match status" value="1"/>
</dbReference>
<dbReference type="PANTHER" id="PTHR43011">
    <property type="entry name" value="IRON-SULFUR CLUSTER ASSEMBLY 2 HOMOLOG, MITOCHONDRIAL"/>
    <property type="match status" value="1"/>
</dbReference>
<dbReference type="PANTHER" id="PTHR43011:SF1">
    <property type="entry name" value="IRON-SULFUR CLUSTER ASSEMBLY 2 HOMOLOG, MITOCHONDRIAL"/>
    <property type="match status" value="1"/>
</dbReference>
<dbReference type="Pfam" id="PF01521">
    <property type="entry name" value="Fe-S_biosyn"/>
    <property type="match status" value="1"/>
</dbReference>
<dbReference type="SUPFAM" id="SSF89360">
    <property type="entry name" value="HesB-like domain"/>
    <property type="match status" value="1"/>
</dbReference>
<dbReference type="PROSITE" id="PS01152">
    <property type="entry name" value="HESB"/>
    <property type="match status" value="1"/>
</dbReference>
<feature type="chain" id="PRO_0000311527" description="Iron-sulfur cluster insertion protein ErpA">
    <location>
        <begin position="1"/>
        <end position="116"/>
    </location>
</feature>
<feature type="binding site" evidence="1">
    <location>
        <position position="44"/>
    </location>
    <ligand>
        <name>iron-sulfur cluster</name>
        <dbReference type="ChEBI" id="CHEBI:30408"/>
    </ligand>
</feature>
<feature type="binding site" evidence="1">
    <location>
        <position position="108"/>
    </location>
    <ligand>
        <name>iron-sulfur cluster</name>
        <dbReference type="ChEBI" id="CHEBI:30408"/>
    </ligand>
</feature>
<feature type="binding site" evidence="1">
    <location>
        <position position="110"/>
    </location>
    <ligand>
        <name>iron-sulfur cluster</name>
        <dbReference type="ChEBI" id="CHEBI:30408"/>
    </ligand>
</feature>
<comment type="function">
    <text evidence="1">Required for insertion of 4Fe-4S clusters for at least IspG.</text>
</comment>
<comment type="cofactor">
    <cofactor evidence="1">
        <name>iron-sulfur cluster</name>
        <dbReference type="ChEBI" id="CHEBI:30408"/>
    </cofactor>
    <text evidence="1">Binds 1 iron-sulfur cluster per subunit.</text>
</comment>
<comment type="subunit">
    <text evidence="1">Homodimer.</text>
</comment>
<comment type="similarity">
    <text evidence="1">Belongs to the HesB/IscA family.</text>
</comment>
<proteinExistence type="inferred from homology"/>
<organism>
    <name type="scientific">Pseudomonas fluorescens (strain Pf0-1)</name>
    <dbReference type="NCBI Taxonomy" id="205922"/>
    <lineage>
        <taxon>Bacteria</taxon>
        <taxon>Pseudomonadati</taxon>
        <taxon>Pseudomonadota</taxon>
        <taxon>Gammaproteobacteria</taxon>
        <taxon>Pseudomonadales</taxon>
        <taxon>Pseudomonadaceae</taxon>
        <taxon>Pseudomonas</taxon>
    </lineage>
</organism>
<evidence type="ECO:0000255" key="1">
    <source>
        <dbReference type="HAMAP-Rule" id="MF_01380"/>
    </source>
</evidence>
<name>ERPA_PSEPF</name>
<keyword id="KW-0408">Iron</keyword>
<keyword id="KW-0411">Iron-sulfur</keyword>
<keyword id="KW-0479">Metal-binding</keyword>